<proteinExistence type="inferred from homology"/>
<dbReference type="EC" id="2.7.1.192" evidence="1"/>
<dbReference type="EMBL" id="AE004439">
    <property type="protein sequence ID" value="AAK03659.1"/>
    <property type="molecule type" value="Genomic_DNA"/>
</dbReference>
<dbReference type="RefSeq" id="WP_005724420.1">
    <property type="nucleotide sequence ID" value="NC_002663.1"/>
</dbReference>
<dbReference type="SMR" id="Q9CKN5"/>
<dbReference type="STRING" id="272843.PM1575"/>
<dbReference type="EnsemblBacteria" id="AAK03659">
    <property type="protein sequence ID" value="AAK03659"/>
    <property type="gene ID" value="PM1575"/>
</dbReference>
<dbReference type="KEGG" id="pmu:PM1575"/>
<dbReference type="HOGENOM" id="CLU_012312_2_0_6"/>
<dbReference type="OrthoDB" id="9797715at2"/>
<dbReference type="Proteomes" id="UP000000809">
    <property type="component" value="Chromosome"/>
</dbReference>
<dbReference type="GO" id="GO:0005886">
    <property type="term" value="C:plasma membrane"/>
    <property type="evidence" value="ECO:0007669"/>
    <property type="project" value="UniProtKB-SubCell"/>
</dbReference>
<dbReference type="GO" id="GO:0016301">
    <property type="term" value="F:kinase activity"/>
    <property type="evidence" value="ECO:0007669"/>
    <property type="project" value="UniProtKB-KW"/>
</dbReference>
<dbReference type="GO" id="GO:0008982">
    <property type="term" value="F:protein-N(PI)-phosphohistidine-sugar phosphotransferase activity"/>
    <property type="evidence" value="ECO:0007669"/>
    <property type="project" value="InterPro"/>
</dbReference>
<dbReference type="GO" id="GO:0090588">
    <property type="term" value="F:protein-phosphocysteine-N-acetylmuramate phosphotransferase system transporter activity"/>
    <property type="evidence" value="ECO:0007669"/>
    <property type="project" value="TreeGrafter"/>
</dbReference>
<dbReference type="GO" id="GO:0009401">
    <property type="term" value="P:phosphoenolpyruvate-dependent sugar phosphotransferase system"/>
    <property type="evidence" value="ECO:0007669"/>
    <property type="project" value="UniProtKB-KW"/>
</dbReference>
<dbReference type="CDD" id="cd00212">
    <property type="entry name" value="PTS_IIB_glc"/>
    <property type="match status" value="1"/>
</dbReference>
<dbReference type="FunFam" id="3.30.1360.60:FF:000001">
    <property type="entry name" value="PTS system glucose-specific IIBC component PtsG"/>
    <property type="match status" value="1"/>
</dbReference>
<dbReference type="Gene3D" id="3.30.1360.60">
    <property type="entry name" value="Glucose permease domain IIB"/>
    <property type="match status" value="1"/>
</dbReference>
<dbReference type="InterPro" id="IPR036878">
    <property type="entry name" value="Glu_permease_IIB"/>
</dbReference>
<dbReference type="InterPro" id="IPR018113">
    <property type="entry name" value="PTrfase_EIIB_Cys"/>
</dbReference>
<dbReference type="InterPro" id="IPR003352">
    <property type="entry name" value="PTS_EIIC"/>
</dbReference>
<dbReference type="InterPro" id="IPR013013">
    <property type="entry name" value="PTS_EIIC_1"/>
</dbReference>
<dbReference type="InterPro" id="IPR001996">
    <property type="entry name" value="PTS_IIB_1"/>
</dbReference>
<dbReference type="InterPro" id="IPR050558">
    <property type="entry name" value="PTS_Sugar-Specific_Components"/>
</dbReference>
<dbReference type="NCBIfam" id="NF007152">
    <property type="entry name" value="PRK09586.1"/>
    <property type="match status" value="1"/>
</dbReference>
<dbReference type="PANTHER" id="PTHR30175">
    <property type="entry name" value="PHOSPHOTRANSFERASE SYSTEM TRANSPORT PROTEIN"/>
    <property type="match status" value="1"/>
</dbReference>
<dbReference type="PANTHER" id="PTHR30175:SF3">
    <property type="entry name" value="PTS SYSTEM N-ACETYLMURAMIC ACID-SPECIFIC EIIBC COMPONENT"/>
    <property type="match status" value="1"/>
</dbReference>
<dbReference type="Pfam" id="PF00367">
    <property type="entry name" value="PTS_EIIB"/>
    <property type="match status" value="1"/>
</dbReference>
<dbReference type="Pfam" id="PF02378">
    <property type="entry name" value="PTS_EIIC"/>
    <property type="match status" value="1"/>
</dbReference>
<dbReference type="SUPFAM" id="SSF55604">
    <property type="entry name" value="Glucose permease domain IIB"/>
    <property type="match status" value="1"/>
</dbReference>
<dbReference type="PROSITE" id="PS51098">
    <property type="entry name" value="PTS_EIIB_TYPE_1"/>
    <property type="match status" value="1"/>
</dbReference>
<dbReference type="PROSITE" id="PS01035">
    <property type="entry name" value="PTS_EIIB_TYPE_1_CYS"/>
    <property type="match status" value="1"/>
</dbReference>
<dbReference type="PROSITE" id="PS51103">
    <property type="entry name" value="PTS_EIIC_TYPE_1"/>
    <property type="match status" value="1"/>
</dbReference>
<protein>
    <recommendedName>
        <fullName evidence="1">PTS system N-acetylmuramic acid-specific EIIBC component</fullName>
    </recommendedName>
    <alternativeName>
        <fullName evidence="1">EIIBC-MurNAc</fullName>
    </alternativeName>
    <domain>
        <recommendedName>
            <fullName evidence="1">N-acetylmuramic acid-specific phosphotransferase enzyme IIB component</fullName>
            <ecNumber evidence="1">2.7.1.192</ecNumber>
        </recommendedName>
        <alternativeName>
            <fullName evidence="1">PTS system N-acetylmuramic acid-specific EIIB component</fullName>
        </alternativeName>
    </domain>
    <domain>
        <recommendedName>
            <fullName evidence="1">N-acetylmuramic acid permease IIC component</fullName>
        </recommendedName>
        <alternativeName>
            <fullName evidence="1">PTS system N-acetylmuramic acid-specific EIIC component</fullName>
        </alternativeName>
    </domain>
</protein>
<gene>
    <name type="primary">murP</name>
    <name type="ordered locus">PM1575</name>
</gene>
<reference key="1">
    <citation type="journal article" date="2001" name="Proc. Natl. Acad. Sci. U.S.A.">
        <title>Complete genomic sequence of Pasteurella multocida Pm70.</title>
        <authorList>
            <person name="May B.J."/>
            <person name="Zhang Q."/>
            <person name="Li L.L."/>
            <person name="Paustian M.L."/>
            <person name="Whittam T.S."/>
            <person name="Kapur V."/>
        </authorList>
    </citation>
    <scope>NUCLEOTIDE SEQUENCE [LARGE SCALE GENOMIC DNA]</scope>
    <source>
        <strain>Pm70</strain>
    </source>
</reference>
<organism>
    <name type="scientific">Pasteurella multocida (strain Pm70)</name>
    <dbReference type="NCBI Taxonomy" id="272843"/>
    <lineage>
        <taxon>Bacteria</taxon>
        <taxon>Pseudomonadati</taxon>
        <taxon>Pseudomonadota</taxon>
        <taxon>Gammaproteobacteria</taxon>
        <taxon>Pasteurellales</taxon>
        <taxon>Pasteurellaceae</taxon>
        <taxon>Pasteurella</taxon>
    </lineage>
</organism>
<accession>Q9CKN5</accession>
<name>PTYBC_PASMU</name>
<sequence>MATIDNAMIHSLIQHLGGKSNIQSVTNCMTRLRVTLHDSSVVDKDELKKIQGVLGVVEADEQLQLILGPGKATKAAEMMKASLGDNMSSPSLQEIARTQKQQIKSAQTSSIHQFFAKFATIFTPLIPGFIGAGLLLGLATVLQQAFVAGVENPNAFLVDLIAYMKVFSKGLFSFLSILIGYNAAKAFGGSGVNGAILASLFILGYNPEATKGIYSGLSNFFGLTIDPRGNIIGVLIAAIVGAKVERWVRKFIPDSLDMALTSTVTLLIMGCFTFLFIMPIGVYLFNGMSWLFSNLNGNPLGTAVLAGLFLISVMLGIHQGFVPVYFALVETQGFNALFPVLAMAGAGQVGAALALYFKANKGAVLRDQIKGAIIPGFLGIGEPLIYGVTLPRVKPFITACIGGAAGGFTIGLIAYLGFPMGLNTVFGPSGLLAIPLMTSPNGVLPAIATYLLGTVVAYATGFITTYFFATKDVDLS</sequence>
<comment type="function">
    <text evidence="1">The phosphoenolpyruvate-dependent sugar phosphotransferase system (sugar PTS), a major carbohydrate active transport system, catalyzes the phosphorylation of incoming sugar substrates concomitantly with their translocation across the cell membrane. This system is involved in N-acetylmuramic acid (MurNAc) transport, yielding cytoplasmic MurNAc-6-P. Is also able to take up anhydro-N-acetylmuramic acid (anhMurNAc), but cannot phosphorylate the carbon 6, probably because of the 1,6-anhydro ring.</text>
</comment>
<comment type="catalytic activity">
    <reaction evidence="1">
        <text>N-acetyl-beta-D-muramate(out) + N(pros)-phospho-L-histidyl-[protein] = N-acetyl-beta-D-muramate 6-phosphate(in) + L-histidyl-[protein]</text>
        <dbReference type="Rhea" id="RHEA:33399"/>
        <dbReference type="Rhea" id="RHEA-COMP:9745"/>
        <dbReference type="Rhea" id="RHEA-COMP:9746"/>
        <dbReference type="ChEBI" id="CHEBI:29979"/>
        <dbReference type="ChEBI" id="CHEBI:58721"/>
        <dbReference type="ChEBI" id="CHEBI:64837"/>
        <dbReference type="ChEBI" id="CHEBI:64848"/>
        <dbReference type="EC" id="2.7.1.192"/>
    </reaction>
</comment>
<comment type="subcellular location">
    <subcellularLocation>
        <location evidence="3">Cell inner membrane</location>
        <topology evidence="3">Multi-pass membrane protein</topology>
    </subcellularLocation>
</comment>
<comment type="domain">
    <text evidence="2">The EIIB domain is phosphorylated by phospho-EIIA on a cysteinyl or histidyl residue, depending on the transported sugar. Then, it transfers the phosphoryl group to the sugar substrate concomitantly with the sugar uptake processed by the EIIC domain.</text>
</comment>
<comment type="domain">
    <text evidence="3">The EIIC domain forms the PTS system translocation channel and contains the specific substrate-binding site.</text>
</comment>
<keyword id="KW-0997">Cell inner membrane</keyword>
<keyword id="KW-1003">Cell membrane</keyword>
<keyword id="KW-0418">Kinase</keyword>
<keyword id="KW-0472">Membrane</keyword>
<keyword id="KW-0598">Phosphotransferase system</keyword>
<keyword id="KW-1185">Reference proteome</keyword>
<keyword id="KW-0762">Sugar transport</keyword>
<keyword id="KW-0808">Transferase</keyword>
<keyword id="KW-0812">Transmembrane</keyword>
<keyword id="KW-1133">Transmembrane helix</keyword>
<keyword id="KW-0813">Transport</keyword>
<evidence type="ECO:0000250" key="1">
    <source>
        <dbReference type="UniProtKB" id="P77272"/>
    </source>
</evidence>
<evidence type="ECO:0000255" key="2">
    <source>
        <dbReference type="PROSITE-ProRule" id="PRU00421"/>
    </source>
</evidence>
<evidence type="ECO:0000255" key="3">
    <source>
        <dbReference type="PROSITE-ProRule" id="PRU00426"/>
    </source>
</evidence>
<feature type="chain" id="PRO_0000248956" description="PTS system N-acetylmuramic acid-specific EIIBC component">
    <location>
        <begin position="1"/>
        <end position="476"/>
    </location>
</feature>
<feature type="transmembrane region" description="Helical" evidence="3">
    <location>
        <begin position="118"/>
        <end position="138"/>
    </location>
</feature>
<feature type="transmembrane region" description="Helical" evidence="3">
    <location>
        <begin position="160"/>
        <end position="180"/>
    </location>
</feature>
<feature type="transmembrane region" description="Helical" evidence="3">
    <location>
        <begin position="186"/>
        <end position="206"/>
    </location>
</feature>
<feature type="transmembrane region" description="Helical" evidence="3">
    <location>
        <begin position="220"/>
        <end position="240"/>
    </location>
</feature>
<feature type="transmembrane region" description="Helical" evidence="3">
    <location>
        <begin position="265"/>
        <end position="285"/>
    </location>
</feature>
<feature type="transmembrane region" description="Helical" evidence="3">
    <location>
        <begin position="304"/>
        <end position="324"/>
    </location>
</feature>
<feature type="transmembrane region" description="Helical" evidence="3">
    <location>
        <begin position="337"/>
        <end position="357"/>
    </location>
</feature>
<feature type="transmembrane region" description="Helical" evidence="3">
    <location>
        <begin position="371"/>
        <end position="391"/>
    </location>
</feature>
<feature type="transmembrane region" description="Helical" evidence="3">
    <location>
        <begin position="396"/>
        <end position="416"/>
    </location>
</feature>
<feature type="transmembrane region" description="Helical" evidence="3">
    <location>
        <begin position="443"/>
        <end position="463"/>
    </location>
</feature>
<feature type="domain" description="PTS EIIB type-1" evidence="2">
    <location>
        <begin position="1"/>
        <end position="89"/>
    </location>
</feature>
<feature type="domain" description="PTS EIIC type-1" evidence="3">
    <location>
        <begin position="116"/>
        <end position="476"/>
    </location>
</feature>
<feature type="active site" description="Phosphocysteine intermediate; for EIIB activity" evidence="2">
    <location>
        <position position="28"/>
    </location>
</feature>